<keyword id="KW-0143">Chaperone</keyword>
<keyword id="KW-0963">Cytoplasm</keyword>
<name>CH10_YERPA</name>
<sequence>MKIRPLHDRVIVKRKEVESKSAGGIVLTGTAAGKSTRGEVLAVGNGRILDNGEIKPLDVKVGDVVIFNDGYGVKAEKIDNEEVLIMSESDILAIVEA</sequence>
<proteinExistence type="inferred from homology"/>
<accession>Q1C0X9</accession>
<evidence type="ECO:0000255" key="1">
    <source>
        <dbReference type="HAMAP-Rule" id="MF_00580"/>
    </source>
</evidence>
<comment type="function">
    <text evidence="1">Together with the chaperonin GroEL, plays an essential role in assisting protein folding. The GroEL-GroES system forms a nano-cage that allows encapsulation of the non-native substrate proteins and provides a physical environment optimized to promote and accelerate protein folding. GroES binds to the apical surface of the GroEL ring, thereby capping the opening of the GroEL channel.</text>
</comment>
<comment type="subunit">
    <text evidence="1">Heptamer of 7 subunits arranged in a ring. Interacts with the chaperonin GroEL.</text>
</comment>
<comment type="subcellular location">
    <subcellularLocation>
        <location evidence="1">Cytoplasm</location>
    </subcellularLocation>
</comment>
<comment type="similarity">
    <text evidence="1">Belongs to the GroES chaperonin family.</text>
</comment>
<protein>
    <recommendedName>
        <fullName evidence="1">Co-chaperonin GroES</fullName>
    </recommendedName>
    <alternativeName>
        <fullName evidence="1">10 kDa chaperonin</fullName>
    </alternativeName>
    <alternativeName>
        <fullName evidence="1">Chaperonin-10</fullName>
        <shortName evidence="1">Cpn10</shortName>
    </alternativeName>
</protein>
<gene>
    <name evidence="1" type="primary">groES</name>
    <name evidence="1" type="synonym">groS</name>
    <name type="ordered locus">YPA_3932</name>
</gene>
<dbReference type="EMBL" id="CP000308">
    <property type="protein sequence ID" value="ABG15893.1"/>
    <property type="molecule type" value="Genomic_DNA"/>
</dbReference>
<dbReference type="RefSeq" id="WP_002209127.1">
    <property type="nucleotide sequence ID" value="NZ_CP009906.1"/>
</dbReference>
<dbReference type="SMR" id="Q1C0X9"/>
<dbReference type="KEGG" id="ypa:YPA_3932"/>
<dbReference type="Proteomes" id="UP000001971">
    <property type="component" value="Chromosome"/>
</dbReference>
<dbReference type="GO" id="GO:0005737">
    <property type="term" value="C:cytoplasm"/>
    <property type="evidence" value="ECO:0007669"/>
    <property type="project" value="UniProtKB-SubCell"/>
</dbReference>
<dbReference type="GO" id="GO:0005524">
    <property type="term" value="F:ATP binding"/>
    <property type="evidence" value="ECO:0007669"/>
    <property type="project" value="InterPro"/>
</dbReference>
<dbReference type="GO" id="GO:0046872">
    <property type="term" value="F:metal ion binding"/>
    <property type="evidence" value="ECO:0007669"/>
    <property type="project" value="TreeGrafter"/>
</dbReference>
<dbReference type="GO" id="GO:0044183">
    <property type="term" value="F:protein folding chaperone"/>
    <property type="evidence" value="ECO:0007669"/>
    <property type="project" value="InterPro"/>
</dbReference>
<dbReference type="GO" id="GO:0051087">
    <property type="term" value="F:protein-folding chaperone binding"/>
    <property type="evidence" value="ECO:0007669"/>
    <property type="project" value="TreeGrafter"/>
</dbReference>
<dbReference type="GO" id="GO:0051082">
    <property type="term" value="F:unfolded protein binding"/>
    <property type="evidence" value="ECO:0007669"/>
    <property type="project" value="TreeGrafter"/>
</dbReference>
<dbReference type="GO" id="GO:0051085">
    <property type="term" value="P:chaperone cofactor-dependent protein refolding"/>
    <property type="evidence" value="ECO:0007669"/>
    <property type="project" value="TreeGrafter"/>
</dbReference>
<dbReference type="CDD" id="cd00320">
    <property type="entry name" value="cpn10"/>
    <property type="match status" value="1"/>
</dbReference>
<dbReference type="FunFam" id="2.30.33.40:FF:000001">
    <property type="entry name" value="10 kDa chaperonin"/>
    <property type="match status" value="1"/>
</dbReference>
<dbReference type="Gene3D" id="2.30.33.40">
    <property type="entry name" value="GroES chaperonin"/>
    <property type="match status" value="1"/>
</dbReference>
<dbReference type="HAMAP" id="MF_00580">
    <property type="entry name" value="CH10"/>
    <property type="match status" value="1"/>
</dbReference>
<dbReference type="InterPro" id="IPR020818">
    <property type="entry name" value="Chaperonin_GroES"/>
</dbReference>
<dbReference type="InterPro" id="IPR037124">
    <property type="entry name" value="Chaperonin_GroES_sf"/>
</dbReference>
<dbReference type="InterPro" id="IPR018369">
    <property type="entry name" value="Chaprnonin_Cpn10_CS"/>
</dbReference>
<dbReference type="InterPro" id="IPR011032">
    <property type="entry name" value="GroES-like_sf"/>
</dbReference>
<dbReference type="NCBIfam" id="NF001526">
    <property type="entry name" value="PRK00364.1-1"/>
    <property type="match status" value="1"/>
</dbReference>
<dbReference type="NCBIfam" id="NF001527">
    <property type="entry name" value="PRK00364.1-2"/>
    <property type="match status" value="1"/>
</dbReference>
<dbReference type="NCBIfam" id="NF001531">
    <property type="entry name" value="PRK00364.2-2"/>
    <property type="match status" value="1"/>
</dbReference>
<dbReference type="PANTHER" id="PTHR10772">
    <property type="entry name" value="10 KDA HEAT SHOCK PROTEIN"/>
    <property type="match status" value="1"/>
</dbReference>
<dbReference type="PANTHER" id="PTHR10772:SF58">
    <property type="entry name" value="CO-CHAPERONIN GROES"/>
    <property type="match status" value="1"/>
</dbReference>
<dbReference type="Pfam" id="PF00166">
    <property type="entry name" value="Cpn10"/>
    <property type="match status" value="1"/>
</dbReference>
<dbReference type="PRINTS" id="PR00297">
    <property type="entry name" value="CHAPERONIN10"/>
</dbReference>
<dbReference type="SMART" id="SM00883">
    <property type="entry name" value="Cpn10"/>
    <property type="match status" value="1"/>
</dbReference>
<dbReference type="SUPFAM" id="SSF50129">
    <property type="entry name" value="GroES-like"/>
    <property type="match status" value="1"/>
</dbReference>
<dbReference type="PROSITE" id="PS00681">
    <property type="entry name" value="CHAPERONINS_CPN10"/>
    <property type="match status" value="1"/>
</dbReference>
<organism>
    <name type="scientific">Yersinia pestis bv. Antiqua (strain Antiqua)</name>
    <dbReference type="NCBI Taxonomy" id="360102"/>
    <lineage>
        <taxon>Bacteria</taxon>
        <taxon>Pseudomonadati</taxon>
        <taxon>Pseudomonadota</taxon>
        <taxon>Gammaproteobacteria</taxon>
        <taxon>Enterobacterales</taxon>
        <taxon>Yersiniaceae</taxon>
        <taxon>Yersinia</taxon>
    </lineage>
</organism>
<reference key="1">
    <citation type="journal article" date="2006" name="J. Bacteriol.">
        <title>Complete genome sequence of Yersinia pestis strains Antiqua and Nepal516: evidence of gene reduction in an emerging pathogen.</title>
        <authorList>
            <person name="Chain P.S.G."/>
            <person name="Hu P."/>
            <person name="Malfatti S.A."/>
            <person name="Radnedge L."/>
            <person name="Larimer F."/>
            <person name="Vergez L.M."/>
            <person name="Worsham P."/>
            <person name="Chu M.C."/>
            <person name="Andersen G.L."/>
        </authorList>
    </citation>
    <scope>NUCLEOTIDE SEQUENCE [LARGE SCALE GENOMIC DNA]</scope>
    <source>
        <strain>Antiqua</strain>
    </source>
</reference>
<feature type="chain" id="PRO_1000025407" description="Co-chaperonin GroES">
    <location>
        <begin position="1"/>
        <end position="97"/>
    </location>
</feature>